<keyword id="KW-0067">ATP-binding</keyword>
<keyword id="KW-0436">Ligase</keyword>
<keyword id="KW-0460">Magnesium</keyword>
<keyword id="KW-0479">Metal-binding</keyword>
<keyword id="KW-0547">Nucleotide-binding</keyword>
<keyword id="KW-0658">Purine biosynthesis</keyword>
<comment type="function">
    <text evidence="1">Involved in the de novo purine biosynthesis. Catalyzes the transfer of formate to 5-phospho-ribosyl-glycinamide (GAR), producing 5-phospho-ribosyl-N-formylglycinamide (FGAR). Formate is provided by PurU via hydrolysis of 10-formyl-tetrahydrofolate.</text>
</comment>
<comment type="catalytic activity">
    <reaction evidence="1">
        <text>N(1)-(5-phospho-beta-D-ribosyl)glycinamide + formate + ATP = N(2)-formyl-N(1)-(5-phospho-beta-D-ribosyl)glycinamide + ADP + phosphate + H(+)</text>
        <dbReference type="Rhea" id="RHEA:24829"/>
        <dbReference type="ChEBI" id="CHEBI:15378"/>
        <dbReference type="ChEBI" id="CHEBI:15740"/>
        <dbReference type="ChEBI" id="CHEBI:30616"/>
        <dbReference type="ChEBI" id="CHEBI:43474"/>
        <dbReference type="ChEBI" id="CHEBI:143788"/>
        <dbReference type="ChEBI" id="CHEBI:147286"/>
        <dbReference type="ChEBI" id="CHEBI:456216"/>
        <dbReference type="EC" id="6.3.1.21"/>
    </reaction>
    <physiologicalReaction direction="left-to-right" evidence="1">
        <dbReference type="Rhea" id="RHEA:24830"/>
    </physiologicalReaction>
</comment>
<comment type="pathway">
    <text evidence="1">Purine metabolism; IMP biosynthesis via de novo pathway; N(2)-formyl-N(1)-(5-phospho-D-ribosyl)glycinamide from N(1)-(5-phospho-D-ribosyl)glycinamide (formate route): step 1/1.</text>
</comment>
<comment type="subunit">
    <text evidence="1">Homodimer.</text>
</comment>
<comment type="similarity">
    <text evidence="1">Belongs to the PurK/PurT family.</text>
</comment>
<accession>A6L404</accession>
<feature type="chain" id="PRO_0000319127" description="Formate-dependent phosphoribosylglycinamide formyltransferase">
    <location>
        <begin position="1"/>
        <end position="389"/>
    </location>
</feature>
<feature type="domain" description="ATP-grasp" evidence="1">
    <location>
        <begin position="109"/>
        <end position="301"/>
    </location>
</feature>
<feature type="binding site" evidence="1">
    <location>
        <begin position="12"/>
        <end position="13"/>
    </location>
    <ligand>
        <name>N(1)-(5-phospho-beta-D-ribosyl)glycinamide</name>
        <dbReference type="ChEBI" id="CHEBI:143788"/>
    </ligand>
</feature>
<feature type="binding site" evidence="1">
    <location>
        <position position="72"/>
    </location>
    <ligand>
        <name>N(1)-(5-phospho-beta-D-ribosyl)glycinamide</name>
        <dbReference type="ChEBI" id="CHEBI:143788"/>
    </ligand>
</feature>
<feature type="binding site" evidence="1">
    <location>
        <position position="104"/>
    </location>
    <ligand>
        <name>ATP</name>
        <dbReference type="ChEBI" id="CHEBI:30616"/>
    </ligand>
</feature>
<feature type="binding site" evidence="1">
    <location>
        <position position="145"/>
    </location>
    <ligand>
        <name>ATP</name>
        <dbReference type="ChEBI" id="CHEBI:30616"/>
    </ligand>
</feature>
<feature type="binding site" evidence="1">
    <location>
        <begin position="150"/>
        <end position="155"/>
    </location>
    <ligand>
        <name>ATP</name>
        <dbReference type="ChEBI" id="CHEBI:30616"/>
    </ligand>
</feature>
<feature type="binding site" evidence="1">
    <location>
        <begin position="185"/>
        <end position="188"/>
    </location>
    <ligand>
        <name>ATP</name>
        <dbReference type="ChEBI" id="CHEBI:30616"/>
    </ligand>
</feature>
<feature type="binding site" evidence="1">
    <location>
        <position position="193"/>
    </location>
    <ligand>
        <name>ATP</name>
        <dbReference type="ChEBI" id="CHEBI:30616"/>
    </ligand>
</feature>
<feature type="binding site" evidence="1">
    <location>
        <position position="258"/>
    </location>
    <ligand>
        <name>Mg(2+)</name>
        <dbReference type="ChEBI" id="CHEBI:18420"/>
    </ligand>
</feature>
<feature type="binding site" evidence="1">
    <location>
        <position position="271"/>
    </location>
    <ligand>
        <name>Mg(2+)</name>
        <dbReference type="ChEBI" id="CHEBI:18420"/>
    </ligand>
</feature>
<feature type="binding site" evidence="1">
    <location>
        <position position="278"/>
    </location>
    <ligand>
        <name>N(1)-(5-phospho-beta-D-ribosyl)glycinamide</name>
        <dbReference type="ChEBI" id="CHEBI:143788"/>
    </ligand>
</feature>
<feature type="binding site" evidence="1">
    <location>
        <position position="350"/>
    </location>
    <ligand>
        <name>N(1)-(5-phospho-beta-D-ribosyl)glycinamide</name>
        <dbReference type="ChEBI" id="CHEBI:143788"/>
    </ligand>
</feature>
<feature type="binding site" evidence="1">
    <location>
        <begin position="357"/>
        <end position="358"/>
    </location>
    <ligand>
        <name>N(1)-(5-phospho-beta-D-ribosyl)glycinamide</name>
        <dbReference type="ChEBI" id="CHEBI:143788"/>
    </ligand>
</feature>
<organism>
    <name type="scientific">Phocaeicola vulgatus (strain ATCC 8482 / DSM 1447 / JCM 5826 / CCUG 4940 / NBRC 14291 / NCTC 11154)</name>
    <name type="common">Bacteroides vulgatus</name>
    <dbReference type="NCBI Taxonomy" id="435590"/>
    <lineage>
        <taxon>Bacteria</taxon>
        <taxon>Pseudomonadati</taxon>
        <taxon>Bacteroidota</taxon>
        <taxon>Bacteroidia</taxon>
        <taxon>Bacteroidales</taxon>
        <taxon>Bacteroidaceae</taxon>
        <taxon>Phocaeicola</taxon>
    </lineage>
</organism>
<gene>
    <name evidence="1" type="primary">purT</name>
    <name type="ordered locus">BVU_2768</name>
</gene>
<proteinExistence type="inferred from homology"/>
<protein>
    <recommendedName>
        <fullName evidence="1">Formate-dependent phosphoribosylglycinamide formyltransferase</fullName>
        <ecNumber evidence="1">6.3.1.21</ecNumber>
    </recommendedName>
    <alternativeName>
        <fullName evidence="1">5'-phosphoribosylglycinamide transformylase 2</fullName>
    </alternativeName>
    <alternativeName>
        <fullName evidence="1">Formate-dependent GAR transformylase</fullName>
    </alternativeName>
    <alternativeName>
        <fullName evidence="1">GAR transformylase 2</fullName>
        <shortName evidence="1">GART 2</shortName>
    </alternativeName>
    <alternativeName>
        <fullName evidence="1">Non-folate glycinamide ribonucleotide transformylase</fullName>
    </alternativeName>
    <alternativeName>
        <fullName evidence="1">Phosphoribosylglycinamide formyltransferase 2</fullName>
    </alternativeName>
</protein>
<evidence type="ECO:0000255" key="1">
    <source>
        <dbReference type="HAMAP-Rule" id="MF_01643"/>
    </source>
</evidence>
<dbReference type="EC" id="6.3.1.21" evidence="1"/>
<dbReference type="EMBL" id="CP000139">
    <property type="protein sequence ID" value="ABR40418.1"/>
    <property type="molecule type" value="Genomic_DNA"/>
</dbReference>
<dbReference type="SMR" id="A6L404"/>
<dbReference type="STRING" id="435590.BVU_2768"/>
<dbReference type="PaxDb" id="435590-BVU_2768"/>
<dbReference type="KEGG" id="bvu:BVU_2768"/>
<dbReference type="eggNOG" id="COG0027">
    <property type="taxonomic scope" value="Bacteria"/>
</dbReference>
<dbReference type="HOGENOM" id="CLU_011534_1_3_10"/>
<dbReference type="BioCyc" id="BVUL435590:G1G59-2879-MONOMER"/>
<dbReference type="UniPathway" id="UPA00074">
    <property type="reaction ID" value="UER00127"/>
</dbReference>
<dbReference type="Proteomes" id="UP000002861">
    <property type="component" value="Chromosome"/>
</dbReference>
<dbReference type="GO" id="GO:0005829">
    <property type="term" value="C:cytosol"/>
    <property type="evidence" value="ECO:0007669"/>
    <property type="project" value="TreeGrafter"/>
</dbReference>
<dbReference type="GO" id="GO:0005524">
    <property type="term" value="F:ATP binding"/>
    <property type="evidence" value="ECO:0007669"/>
    <property type="project" value="UniProtKB-UniRule"/>
</dbReference>
<dbReference type="GO" id="GO:0000287">
    <property type="term" value="F:magnesium ion binding"/>
    <property type="evidence" value="ECO:0007669"/>
    <property type="project" value="InterPro"/>
</dbReference>
<dbReference type="GO" id="GO:0043815">
    <property type="term" value="F:phosphoribosylglycinamide formyltransferase 2 activity"/>
    <property type="evidence" value="ECO:0007669"/>
    <property type="project" value="UniProtKB-UniRule"/>
</dbReference>
<dbReference type="GO" id="GO:0004644">
    <property type="term" value="F:phosphoribosylglycinamide formyltransferase activity"/>
    <property type="evidence" value="ECO:0007669"/>
    <property type="project" value="InterPro"/>
</dbReference>
<dbReference type="GO" id="GO:0006189">
    <property type="term" value="P:'de novo' IMP biosynthetic process"/>
    <property type="evidence" value="ECO:0007669"/>
    <property type="project" value="UniProtKB-UniRule"/>
</dbReference>
<dbReference type="FunFam" id="3.30.1490.20:FF:000013">
    <property type="entry name" value="Formate-dependent phosphoribosylglycinamide formyltransferase"/>
    <property type="match status" value="1"/>
</dbReference>
<dbReference type="FunFam" id="3.30.470.20:FF:000035">
    <property type="entry name" value="Formate-dependent phosphoribosylglycinamide formyltransferase"/>
    <property type="match status" value="1"/>
</dbReference>
<dbReference type="FunFam" id="3.40.50.20:FF:000022">
    <property type="entry name" value="Formate-dependent phosphoribosylglycinamide formyltransferase"/>
    <property type="match status" value="1"/>
</dbReference>
<dbReference type="Gene3D" id="3.40.50.20">
    <property type="match status" value="1"/>
</dbReference>
<dbReference type="Gene3D" id="3.30.1490.20">
    <property type="entry name" value="ATP-grasp fold, A domain"/>
    <property type="match status" value="1"/>
</dbReference>
<dbReference type="Gene3D" id="3.30.470.20">
    <property type="entry name" value="ATP-grasp fold, B domain"/>
    <property type="match status" value="1"/>
</dbReference>
<dbReference type="HAMAP" id="MF_01643">
    <property type="entry name" value="PurT"/>
    <property type="match status" value="1"/>
</dbReference>
<dbReference type="InterPro" id="IPR011761">
    <property type="entry name" value="ATP-grasp"/>
</dbReference>
<dbReference type="InterPro" id="IPR003135">
    <property type="entry name" value="ATP-grasp_carboxylate-amine"/>
</dbReference>
<dbReference type="InterPro" id="IPR013815">
    <property type="entry name" value="ATP_grasp_subdomain_1"/>
</dbReference>
<dbReference type="InterPro" id="IPR016185">
    <property type="entry name" value="PreATP-grasp_dom_sf"/>
</dbReference>
<dbReference type="InterPro" id="IPR005862">
    <property type="entry name" value="PurT"/>
</dbReference>
<dbReference type="InterPro" id="IPR054350">
    <property type="entry name" value="PurT/PurK_preATP-grasp"/>
</dbReference>
<dbReference type="InterPro" id="IPR048740">
    <property type="entry name" value="PurT_C"/>
</dbReference>
<dbReference type="InterPro" id="IPR011054">
    <property type="entry name" value="Rudment_hybrid_motif"/>
</dbReference>
<dbReference type="NCBIfam" id="NF006766">
    <property type="entry name" value="PRK09288.1"/>
    <property type="match status" value="1"/>
</dbReference>
<dbReference type="PANTHER" id="PTHR43055">
    <property type="entry name" value="FORMATE-DEPENDENT PHOSPHORIBOSYLGLYCINAMIDE FORMYLTRANSFERASE"/>
    <property type="match status" value="1"/>
</dbReference>
<dbReference type="PANTHER" id="PTHR43055:SF1">
    <property type="entry name" value="FORMATE-DEPENDENT PHOSPHORIBOSYLGLYCINAMIDE FORMYLTRANSFERASE"/>
    <property type="match status" value="1"/>
</dbReference>
<dbReference type="Pfam" id="PF02222">
    <property type="entry name" value="ATP-grasp"/>
    <property type="match status" value="1"/>
</dbReference>
<dbReference type="Pfam" id="PF21244">
    <property type="entry name" value="PurT_C"/>
    <property type="match status" value="1"/>
</dbReference>
<dbReference type="Pfam" id="PF22660">
    <property type="entry name" value="RS_preATP-grasp-like"/>
    <property type="match status" value="1"/>
</dbReference>
<dbReference type="SUPFAM" id="SSF56059">
    <property type="entry name" value="Glutathione synthetase ATP-binding domain-like"/>
    <property type="match status" value="1"/>
</dbReference>
<dbReference type="SUPFAM" id="SSF52440">
    <property type="entry name" value="PreATP-grasp domain"/>
    <property type="match status" value="1"/>
</dbReference>
<dbReference type="SUPFAM" id="SSF51246">
    <property type="entry name" value="Rudiment single hybrid motif"/>
    <property type="match status" value="1"/>
</dbReference>
<dbReference type="PROSITE" id="PS50975">
    <property type="entry name" value="ATP_GRASP"/>
    <property type="match status" value="1"/>
</dbReference>
<reference key="1">
    <citation type="journal article" date="2007" name="PLoS Biol.">
        <title>Evolution of symbiotic bacteria in the distal human intestine.</title>
        <authorList>
            <person name="Xu J."/>
            <person name="Mahowald M.A."/>
            <person name="Ley R.E."/>
            <person name="Lozupone C.A."/>
            <person name="Hamady M."/>
            <person name="Martens E.C."/>
            <person name="Henrissat B."/>
            <person name="Coutinho P.M."/>
            <person name="Minx P."/>
            <person name="Latreille P."/>
            <person name="Cordum H."/>
            <person name="Van Brunt A."/>
            <person name="Kim K."/>
            <person name="Fulton R.S."/>
            <person name="Fulton L.A."/>
            <person name="Clifton S.W."/>
            <person name="Wilson R.K."/>
            <person name="Knight R.D."/>
            <person name="Gordon J.I."/>
        </authorList>
    </citation>
    <scope>NUCLEOTIDE SEQUENCE [LARGE SCALE GENOMIC DNA]</scope>
    <source>
        <strain>ATCC 8482 / DSM 1447 / JCM 5826 / CCUG 4940 / NBRC 14291 / NCTC 11154</strain>
    </source>
</reference>
<name>PURT_PHOV8</name>
<sequence length="389" mass="42893">MTKKILLLGSGELGKEFVIAAKRKGQYVIACDSYAGAPAMQVADEFEVFSMLDGDALDAVVAKHKPDIIVPEIEAIRTERLYHLEQEGIQVVPSARAVNFTMNRKAIRDLAAKELGLKTAKYFYAKSLEELQEAAKEIGFPCVVKPLMSSSGKGQSLVKSADELEQAWHYGCEGSRGDIKELIIEEFIQFDSEITLLTVTQKNGPTLFCPPIGHVQKGGDYRESFQPAHIDPEHLKEAQRMADKVTAALTGAGIWGVEFFLSHENGVYFSELSPRPHDTGMVTLAGTQNLNEFELHLRAVLGLPIPEITQERIGASAVILSPIASKEAPRYRGEEEVCKETNTYLRIFGKPYTKLNRRMGVVVCYAPNGSDLDALRDKCKAAAAKVEVY</sequence>